<feature type="chain" id="PRO_0000343442" description="Transcription initiation factor TFIID subunit 4">
    <location>
        <begin position="1"/>
        <end position="455"/>
    </location>
</feature>
<feature type="domain" description="Histone-fold">
    <location>
        <begin position="247"/>
        <end position="323"/>
    </location>
</feature>
<feature type="region of interest" description="Disordered" evidence="3">
    <location>
        <begin position="1"/>
        <end position="37"/>
    </location>
</feature>
<feature type="region of interest" description="Disordered" evidence="3">
    <location>
        <begin position="80"/>
        <end position="112"/>
    </location>
</feature>
<feature type="coiled-coil region" evidence="2">
    <location>
        <begin position="314"/>
        <end position="370"/>
    </location>
</feature>
<feature type="compositionally biased region" description="Basic and acidic residues" evidence="3">
    <location>
        <begin position="1"/>
        <end position="12"/>
    </location>
</feature>
<feature type="compositionally biased region" description="Polar residues" evidence="3">
    <location>
        <begin position="83"/>
        <end position="112"/>
    </location>
</feature>
<gene>
    <name type="primary">TAF4</name>
    <name type="ORF">PGUG_00432</name>
</gene>
<sequence>MSDSDGSKRPSETPDAADSDSKRQRGSSKSPVDVDEELNAILGANGISELEAASGNANQQDIMDIDFDNLPAELLQKDDIQADRNSVGRSTSGSQTPQPIKSESMINVPQSSQISRPIIRPAMPSAPVVPSSSAPVNRMNPLVQQANSIHGLNTSSIDNRTAPNFSTGHSTGQAGGNNQDRFHTNDPSKLNDALAAAGVDIGREEELLQQQQYNRAPRINVQQPSYLQSRPARQIQRTPFLNSYHLGTFMQRVARENGVLQSFMSDNELLELMSASCEQWISHIATKTVLLSRHRRRGIPALKNKKLAANQIPRSEVSKELRNLALKQKELEEQRVSRRILLGLENKDANSESNKVGAEETLHRAANETAAMMTSNKKKYSWMSSGAGNGDDSKAMEREKDKQSHLLALRGDNGLRFRDIRTGDSVTMKDLLAALEDERMGVNKAIMKGYARLKD</sequence>
<name>TAF4_PICGU</name>
<keyword id="KW-0175">Coiled coil</keyword>
<keyword id="KW-0539">Nucleus</keyword>
<keyword id="KW-1185">Reference proteome</keyword>
<keyword id="KW-0804">Transcription</keyword>
<keyword id="KW-0805">Transcription regulation</keyword>
<accession>A5DAX7</accession>
<protein>
    <recommendedName>
        <fullName>Transcription initiation factor TFIID subunit 4</fullName>
    </recommendedName>
    <alternativeName>
        <fullName>TBP-associated factor 4</fullName>
    </alternativeName>
</protein>
<comment type="function">
    <text evidence="1">Functions as a component of the DNA-binding general transcription factor complex TFIID. Binding of TFIID to a promoter (with or without TATA element) is the initial step in pre-initiation complex (PIC) formation. TFIID plays a key role in the regulation of gene expression by RNA polymerase II through different activities such as transcription activator interaction, core promoter recognition and selectivity, TFIIA and TFIIB interaction, chromatin modification (histone acetylation by TAF1), facilitation of DNA opening and initiation of transcription (By similarity).</text>
</comment>
<comment type="subunit">
    <text evidence="1">The 1.2 MDa TFIID complex is composed of TATA binding protein (TBP) and the 14 TBP-associated factors.</text>
</comment>
<comment type="subcellular location">
    <subcellularLocation>
        <location evidence="1">Nucleus</location>
    </subcellularLocation>
</comment>
<comment type="similarity">
    <text evidence="4">Belongs to the TAF4 family.</text>
</comment>
<proteinExistence type="inferred from homology"/>
<organism>
    <name type="scientific">Meyerozyma guilliermondii (strain ATCC 6260 / CBS 566 / DSM 6381 / JCM 1539 / NBRC 10279 / NRRL Y-324)</name>
    <name type="common">Yeast</name>
    <name type="synonym">Candida guilliermondii</name>
    <dbReference type="NCBI Taxonomy" id="294746"/>
    <lineage>
        <taxon>Eukaryota</taxon>
        <taxon>Fungi</taxon>
        <taxon>Dikarya</taxon>
        <taxon>Ascomycota</taxon>
        <taxon>Saccharomycotina</taxon>
        <taxon>Pichiomycetes</taxon>
        <taxon>Debaryomycetaceae</taxon>
        <taxon>Meyerozyma</taxon>
    </lineage>
</organism>
<reference key="1">
    <citation type="journal article" date="2009" name="Nature">
        <title>Evolution of pathogenicity and sexual reproduction in eight Candida genomes.</title>
        <authorList>
            <person name="Butler G."/>
            <person name="Rasmussen M.D."/>
            <person name="Lin M.F."/>
            <person name="Santos M.A.S."/>
            <person name="Sakthikumar S."/>
            <person name="Munro C.A."/>
            <person name="Rheinbay E."/>
            <person name="Grabherr M."/>
            <person name="Forche A."/>
            <person name="Reedy J.L."/>
            <person name="Agrafioti I."/>
            <person name="Arnaud M.B."/>
            <person name="Bates S."/>
            <person name="Brown A.J.P."/>
            <person name="Brunke S."/>
            <person name="Costanzo M.C."/>
            <person name="Fitzpatrick D.A."/>
            <person name="de Groot P.W.J."/>
            <person name="Harris D."/>
            <person name="Hoyer L.L."/>
            <person name="Hube B."/>
            <person name="Klis F.M."/>
            <person name="Kodira C."/>
            <person name="Lennard N."/>
            <person name="Logue M.E."/>
            <person name="Martin R."/>
            <person name="Neiman A.M."/>
            <person name="Nikolaou E."/>
            <person name="Quail M.A."/>
            <person name="Quinn J."/>
            <person name="Santos M.C."/>
            <person name="Schmitzberger F.F."/>
            <person name="Sherlock G."/>
            <person name="Shah P."/>
            <person name="Silverstein K.A.T."/>
            <person name="Skrzypek M.S."/>
            <person name="Soll D."/>
            <person name="Staggs R."/>
            <person name="Stansfield I."/>
            <person name="Stumpf M.P.H."/>
            <person name="Sudbery P.E."/>
            <person name="Srikantha T."/>
            <person name="Zeng Q."/>
            <person name="Berman J."/>
            <person name="Berriman M."/>
            <person name="Heitman J."/>
            <person name="Gow N.A.R."/>
            <person name="Lorenz M.C."/>
            <person name="Birren B.W."/>
            <person name="Kellis M."/>
            <person name="Cuomo C.A."/>
        </authorList>
    </citation>
    <scope>NUCLEOTIDE SEQUENCE [LARGE SCALE GENOMIC DNA]</scope>
    <source>
        <strain>ATCC 6260 / CBS 566 / DSM 6381 / JCM 1539 / NBRC 10279 / NRRL Y-324</strain>
    </source>
</reference>
<evidence type="ECO:0000250" key="1"/>
<evidence type="ECO:0000255" key="2"/>
<evidence type="ECO:0000256" key="3">
    <source>
        <dbReference type="SAM" id="MobiDB-lite"/>
    </source>
</evidence>
<evidence type="ECO:0000305" key="4"/>
<dbReference type="EMBL" id="CH408155">
    <property type="protein sequence ID" value="EDK36334.2"/>
    <property type="molecule type" value="Genomic_DNA"/>
</dbReference>
<dbReference type="RefSeq" id="XP_001487055.1">
    <property type="nucleotide sequence ID" value="XM_001487005.1"/>
</dbReference>
<dbReference type="FunCoup" id="A5DAX7">
    <property type="interactions" value="331"/>
</dbReference>
<dbReference type="STRING" id="294746.A5DAX7"/>
<dbReference type="GeneID" id="5128568"/>
<dbReference type="KEGG" id="pgu:PGUG_00432"/>
<dbReference type="eggNOG" id="KOG2341">
    <property type="taxonomic scope" value="Eukaryota"/>
</dbReference>
<dbReference type="HOGENOM" id="CLU_036634_1_0_1"/>
<dbReference type="InParanoid" id="A5DAX7"/>
<dbReference type="OMA" id="CEQWISH"/>
<dbReference type="OrthoDB" id="21060at2759"/>
<dbReference type="Proteomes" id="UP000001997">
    <property type="component" value="Unassembled WGS sequence"/>
</dbReference>
<dbReference type="GO" id="GO:0005669">
    <property type="term" value="C:transcription factor TFIID complex"/>
    <property type="evidence" value="ECO:0007669"/>
    <property type="project" value="InterPro"/>
</dbReference>
<dbReference type="GO" id="GO:0006352">
    <property type="term" value="P:DNA-templated transcription initiation"/>
    <property type="evidence" value="ECO:0007669"/>
    <property type="project" value="InterPro"/>
</dbReference>
<dbReference type="CDD" id="cd08045">
    <property type="entry name" value="HFD_TAF4"/>
    <property type="match status" value="1"/>
</dbReference>
<dbReference type="InterPro" id="IPR007900">
    <property type="entry name" value="TAF4_C"/>
</dbReference>
<dbReference type="Pfam" id="PF05236">
    <property type="entry name" value="TAF4"/>
    <property type="match status" value="1"/>
</dbReference>